<protein>
    <recommendedName>
        <fullName evidence="13">Active breakpoint cluster region-related protein</fullName>
    </recommendedName>
</protein>
<sequence>MEPLSHRGLPRLSWIDTLYSNFSYGTDEYDGEGNEEQKGPPEGSETMPYIDESPTMSPQLSARSQGGGDGVSPTPPEGLAPGVEAGKGLEMRKLVLSGFLASEEIYINQLEALLLPMKPLKATATTSQPVLTIQQIETIFYKIQDIYEIHKEFYDNLCPKVQQWDSQVTMGHLFQKLASQLGVYKAFVDNYKVALETAEKCSQSNNQFQKISEELKVKGPKDSKDSHTSVTMEALLYKPIDRVTRSTLVLHDLLKHTPVDHPDYPLLQDALRISQNFLSSINEDIDPRRTAVTTPKGETRQLVKDGFLVEVSESSRKLRHVFLFTDVLLCAKLKKTSAGKHQQYDCKWYIPLADLVFPSPEESEASPQVHPFPDHELEDMKMKISALKSEIQKEKANKGQSRAIERLKKKMFENEFLLLLNSPTIPFRIHNRNGKSYLFLLSSDYERSEWREAIQKLQKKDLQAFVLSSVELQVLTGSCFKLRTVHNIPVTSNKDDDESPGLYGFLHVIVHSAKGFKQSANLYCTLEVDSFGYFVSKAKTRVFRDTAEPKWDEEFEIELEGSQSLRILCYEKCYDKTKVNKDNNEIVDKIMGKGQIQLDPQTVETKNWHTDVIEMNGIKVEFSMKFTSRDMSLKRTPSKKQTGVFGVKISVVTKRERSKVPYIVRQCVEEVEKRGIEEVGIYRISGVATDIQALKAVFDANNKDILLMLSDMDINAIAGTLKLYFRELPEPLLTDRLYPAFMEGIALSDPAAKENCMMHLLRSLPDPNLITFLFLLEHLKRVAEKEPINKMSLHNLATVFGPTLLRPSEVESKAHLTSAADIWSHDVMAQVQVLLYYLQHPPISFAELKRNTLYFSTDV</sequence>
<organism>
    <name type="scientific">Homo sapiens</name>
    <name type="common">Human</name>
    <dbReference type="NCBI Taxonomy" id="9606"/>
    <lineage>
        <taxon>Eukaryota</taxon>
        <taxon>Metazoa</taxon>
        <taxon>Chordata</taxon>
        <taxon>Craniata</taxon>
        <taxon>Vertebrata</taxon>
        <taxon>Euteleostomi</taxon>
        <taxon>Mammalia</taxon>
        <taxon>Eutheria</taxon>
        <taxon>Euarchontoglires</taxon>
        <taxon>Primates</taxon>
        <taxon>Haplorrhini</taxon>
        <taxon>Catarrhini</taxon>
        <taxon>Hominidae</taxon>
        <taxon>Homo</taxon>
    </lineage>
</organism>
<dbReference type="EMBL" id="U01147">
    <property type="protein sequence ID" value="AAC50063.1"/>
    <property type="molecule type" value="mRNA"/>
</dbReference>
<dbReference type="EMBL" id="L19704">
    <property type="protein sequence ID" value="AAC37519.1"/>
    <property type="molecule type" value="Genomic_DNA"/>
</dbReference>
<dbReference type="EMBL" id="L19705">
    <property type="protein sequence ID" value="AAC37518.1"/>
    <property type="molecule type" value="Genomic_DNA"/>
</dbReference>
<dbReference type="EMBL" id="AK124547">
    <property type="protein sequence ID" value="BAG54051.1"/>
    <property type="molecule type" value="mRNA"/>
</dbReference>
<dbReference type="EMBL" id="AK300336">
    <property type="protein sequence ID" value="BAH13263.1"/>
    <property type="molecule type" value="mRNA"/>
</dbReference>
<dbReference type="EMBL" id="AC015884">
    <property type="status" value="NOT_ANNOTATED_CDS"/>
    <property type="molecule type" value="Genomic_DNA"/>
</dbReference>
<dbReference type="EMBL" id="AC016292">
    <property type="status" value="NOT_ANNOTATED_CDS"/>
    <property type="molecule type" value="Genomic_DNA"/>
</dbReference>
<dbReference type="EMBL" id="AC144836">
    <property type="status" value="NOT_ANNOTATED_CDS"/>
    <property type="molecule type" value="Genomic_DNA"/>
</dbReference>
<dbReference type="EMBL" id="CH471108">
    <property type="protein sequence ID" value="EAW90631.1"/>
    <property type="molecule type" value="Genomic_DNA"/>
</dbReference>
<dbReference type="EMBL" id="CH471108">
    <property type="protein sequence ID" value="EAW90633.1"/>
    <property type="molecule type" value="Genomic_DNA"/>
</dbReference>
<dbReference type="EMBL" id="CH471108">
    <property type="protein sequence ID" value="EAW90634.1"/>
    <property type="molecule type" value="Genomic_DNA"/>
</dbReference>
<dbReference type="EMBL" id="CH471108">
    <property type="protein sequence ID" value="EAW90635.1"/>
    <property type="molecule type" value="Genomic_DNA"/>
</dbReference>
<dbReference type="CCDS" id="CCDS10999.1">
    <molecule id="Q12979-1"/>
</dbReference>
<dbReference type="CCDS" id="CCDS11000.1">
    <molecule id="Q12979-2"/>
</dbReference>
<dbReference type="CCDS" id="CCDS54060.1">
    <molecule id="Q12979-4"/>
</dbReference>
<dbReference type="CCDS" id="CCDS58497.1">
    <molecule id="Q12979-3"/>
</dbReference>
<dbReference type="PIR" id="A47485">
    <property type="entry name" value="A47485"/>
</dbReference>
<dbReference type="PIR" id="A49307">
    <property type="entry name" value="A49307"/>
</dbReference>
<dbReference type="RefSeq" id="NP_001083.2">
    <molecule id="Q12979-2"/>
    <property type="nucleotide sequence ID" value="NM_001092.4"/>
</dbReference>
<dbReference type="RefSeq" id="NP_001153218.1">
    <molecule id="Q12979-4"/>
    <property type="nucleotide sequence ID" value="NM_001159746.3"/>
</dbReference>
<dbReference type="RefSeq" id="NP_001243776.1">
    <molecule id="Q12979-3"/>
    <property type="nucleotide sequence ID" value="NM_001256847.3"/>
</dbReference>
<dbReference type="RefSeq" id="NP_001269078.1">
    <property type="nucleotide sequence ID" value="NM_001282149.1"/>
</dbReference>
<dbReference type="RefSeq" id="NP_001309769.1">
    <molecule id="Q12979-4"/>
    <property type="nucleotide sequence ID" value="NM_001322840.2"/>
</dbReference>
<dbReference type="RefSeq" id="NP_068781.2">
    <molecule id="Q12979-1"/>
    <property type="nucleotide sequence ID" value="NM_021962.4"/>
</dbReference>
<dbReference type="SMR" id="Q12979"/>
<dbReference type="BioGRID" id="106547">
    <property type="interactions" value="41"/>
</dbReference>
<dbReference type="FunCoup" id="Q12979">
    <property type="interactions" value="1333"/>
</dbReference>
<dbReference type="IntAct" id="Q12979">
    <property type="interactions" value="13"/>
</dbReference>
<dbReference type="MINT" id="Q12979"/>
<dbReference type="STRING" id="9606.ENSP00000303909"/>
<dbReference type="GlyGen" id="Q12979">
    <property type="glycosylation" value="2 sites, 1 O-linked glycan (1 site)"/>
</dbReference>
<dbReference type="iPTMnet" id="Q12979"/>
<dbReference type="PhosphoSitePlus" id="Q12979"/>
<dbReference type="BioMuta" id="ABR"/>
<dbReference type="DMDM" id="357528764"/>
<dbReference type="jPOST" id="Q12979"/>
<dbReference type="MassIVE" id="Q12979"/>
<dbReference type="PaxDb" id="9606-ENSP00000303909"/>
<dbReference type="PeptideAtlas" id="Q12979"/>
<dbReference type="ProteomicsDB" id="26359"/>
<dbReference type="ProteomicsDB" id="27736"/>
<dbReference type="ProteomicsDB" id="59072">
    <molecule id="Q12979-1"/>
</dbReference>
<dbReference type="ProteomicsDB" id="59073">
    <molecule id="Q12979-2"/>
</dbReference>
<dbReference type="Pumba" id="Q12979"/>
<dbReference type="Antibodypedia" id="22668">
    <property type="antibodies" value="75 antibodies from 20 providers"/>
</dbReference>
<dbReference type="DNASU" id="29"/>
<dbReference type="Ensembl" id="ENST00000291107.6">
    <molecule id="Q12979-2"/>
    <property type="protein sequence ID" value="ENSP00000291107.2"/>
    <property type="gene ID" value="ENSG00000159842.16"/>
</dbReference>
<dbReference type="Ensembl" id="ENST00000302538.10">
    <molecule id="Q12979-1"/>
    <property type="protein sequence ID" value="ENSP00000303909.5"/>
    <property type="gene ID" value="ENSG00000159842.16"/>
</dbReference>
<dbReference type="Ensembl" id="ENST00000543210.6">
    <molecule id="Q12979-3"/>
    <property type="protein sequence ID" value="ENSP00000445198.2"/>
    <property type="gene ID" value="ENSG00000159842.16"/>
</dbReference>
<dbReference type="Ensembl" id="ENST00000544583.6">
    <molecule id="Q12979-4"/>
    <property type="protein sequence ID" value="ENSP00000442048.2"/>
    <property type="gene ID" value="ENSG00000159842.16"/>
</dbReference>
<dbReference type="Ensembl" id="ENST00000611009.4">
    <molecule id="Q12979-3"/>
    <property type="protein sequence ID" value="ENSP00000484030.1"/>
    <property type="gene ID" value="ENSG00000276016.4"/>
</dbReference>
<dbReference type="Ensembl" id="ENST00000611021.3">
    <molecule id="Q12979-2"/>
    <property type="protein sequence ID" value="ENSP00000483168.1"/>
    <property type="gene ID" value="ENSG00000278741.4"/>
</dbReference>
<dbReference type="Ensembl" id="ENST00000612118.4">
    <molecule id="Q12979-1"/>
    <property type="protein sequence ID" value="ENSP00000481740.1"/>
    <property type="gene ID" value="ENSG00000278741.4"/>
</dbReference>
<dbReference type="Ensembl" id="ENST00000615642.4">
    <molecule id="Q12979-3"/>
    <property type="protein sequence ID" value="ENSP00000479455.1"/>
    <property type="gene ID" value="ENSG00000278741.4"/>
</dbReference>
<dbReference type="Ensembl" id="ENST00000620619.4">
    <molecule id="Q12979-4"/>
    <property type="protein sequence ID" value="ENSP00000478880.1"/>
    <property type="gene ID" value="ENSG00000278741.4"/>
</dbReference>
<dbReference type="Ensembl" id="ENST00000625740.2">
    <molecule id="Q12979-2"/>
    <property type="protein sequence ID" value="ENSP00000486511.1"/>
    <property type="gene ID" value="ENSG00000276016.4"/>
</dbReference>
<dbReference type="Ensembl" id="ENST00000627258.2">
    <molecule id="Q12979-4"/>
    <property type="protein sequence ID" value="ENSP00000486214.1"/>
    <property type="gene ID" value="ENSG00000278741.4"/>
</dbReference>
<dbReference type="GeneID" id="29"/>
<dbReference type="KEGG" id="hsa:29"/>
<dbReference type="MANE-Select" id="ENST00000302538.10">
    <property type="protein sequence ID" value="ENSP00000303909.5"/>
    <property type="RefSeq nucleotide sequence ID" value="NM_021962.5"/>
    <property type="RefSeq protein sequence ID" value="NP_068781.2"/>
</dbReference>
<dbReference type="UCSC" id="uc002fsd.6">
    <molecule id="Q12979-1"/>
    <property type="organism name" value="human"/>
</dbReference>
<dbReference type="AGR" id="HGNC:81"/>
<dbReference type="CTD" id="29"/>
<dbReference type="DisGeNET" id="29"/>
<dbReference type="GeneCards" id="ABR"/>
<dbReference type="HGNC" id="HGNC:81">
    <property type="gene designation" value="ABR"/>
</dbReference>
<dbReference type="HPA" id="ENSG00000159842">
    <property type="expression patterns" value="Tissue enhanced (brain)"/>
</dbReference>
<dbReference type="MIM" id="600365">
    <property type="type" value="gene"/>
</dbReference>
<dbReference type="neXtProt" id="NX_Q12979"/>
<dbReference type="OpenTargets" id="ENSG00000159842"/>
<dbReference type="PharmGKB" id="PA24417"/>
<dbReference type="VEuPathDB" id="HostDB:ENSG00000159842"/>
<dbReference type="eggNOG" id="KOG4269">
    <property type="taxonomic scope" value="Eukaryota"/>
</dbReference>
<dbReference type="GeneTree" id="ENSGT00940000153491"/>
<dbReference type="HOGENOM" id="CLU_004000_1_0_1"/>
<dbReference type="InParanoid" id="Q12979"/>
<dbReference type="OMA" id="TMFYKIP"/>
<dbReference type="OrthoDB" id="79452at2759"/>
<dbReference type="PAN-GO" id="Q12979">
    <property type="GO annotations" value="1 GO annotation based on evolutionary models"/>
</dbReference>
<dbReference type="PhylomeDB" id="Q12979"/>
<dbReference type="TreeFam" id="TF105082"/>
<dbReference type="PathwayCommons" id="Q12979"/>
<dbReference type="Reactome" id="R-HSA-193648">
    <property type="pathway name" value="NRAGE signals death through JNK"/>
</dbReference>
<dbReference type="Reactome" id="R-HSA-416482">
    <property type="pathway name" value="G alpha (12/13) signalling events"/>
</dbReference>
<dbReference type="Reactome" id="R-HSA-8980692">
    <property type="pathway name" value="RHOA GTPase cycle"/>
</dbReference>
<dbReference type="Reactome" id="R-HSA-9013026">
    <property type="pathway name" value="RHOB GTPase cycle"/>
</dbReference>
<dbReference type="Reactome" id="R-HSA-9013106">
    <property type="pathway name" value="RHOC GTPase cycle"/>
</dbReference>
<dbReference type="Reactome" id="R-HSA-9013148">
    <property type="pathway name" value="CDC42 GTPase cycle"/>
</dbReference>
<dbReference type="Reactome" id="R-HSA-9013149">
    <property type="pathway name" value="RAC1 GTPase cycle"/>
</dbReference>
<dbReference type="Reactome" id="R-HSA-9013404">
    <property type="pathway name" value="RAC2 GTPase cycle"/>
</dbReference>
<dbReference type="Reactome" id="R-HSA-9013423">
    <property type="pathway name" value="RAC3 GTPase cycle"/>
</dbReference>
<dbReference type="SignaLink" id="Q12979"/>
<dbReference type="SIGNOR" id="Q12979"/>
<dbReference type="BioGRID-ORCS" id="29">
    <property type="hits" value="17 hits in 1143 CRISPR screens"/>
</dbReference>
<dbReference type="CD-CODE" id="FB4E32DD">
    <property type="entry name" value="Presynaptic clusters and postsynaptic densities"/>
</dbReference>
<dbReference type="ChiTaRS" id="ABR">
    <property type="organism name" value="human"/>
</dbReference>
<dbReference type="GenomeRNAi" id="29"/>
<dbReference type="Pharos" id="Q12979">
    <property type="development level" value="Tbio"/>
</dbReference>
<dbReference type="PRO" id="PR:Q12979"/>
<dbReference type="Proteomes" id="UP000005640">
    <property type="component" value="Chromosome 17"/>
</dbReference>
<dbReference type="RNAct" id="Q12979">
    <property type="molecule type" value="protein"/>
</dbReference>
<dbReference type="Bgee" id="ENSG00000159842">
    <property type="expression patterns" value="Expressed in superior frontal gyrus and 102 other cell types or tissues"/>
</dbReference>
<dbReference type="ExpressionAtlas" id="Q12979">
    <property type="expression patterns" value="baseline and differential"/>
</dbReference>
<dbReference type="GO" id="GO:0030424">
    <property type="term" value="C:axon"/>
    <property type="evidence" value="ECO:0007669"/>
    <property type="project" value="UniProtKB-SubCell"/>
</dbReference>
<dbReference type="GO" id="GO:0005829">
    <property type="term" value="C:cytosol"/>
    <property type="evidence" value="ECO:0000304"/>
    <property type="project" value="Reactome"/>
</dbReference>
<dbReference type="GO" id="GO:0043197">
    <property type="term" value="C:dendritic spine"/>
    <property type="evidence" value="ECO:0007669"/>
    <property type="project" value="UniProtKB-SubCell"/>
</dbReference>
<dbReference type="GO" id="GO:0098978">
    <property type="term" value="C:glutamatergic synapse"/>
    <property type="evidence" value="ECO:0000250"/>
    <property type="project" value="UniProtKB"/>
</dbReference>
<dbReference type="GO" id="GO:0016020">
    <property type="term" value="C:membrane"/>
    <property type="evidence" value="ECO:0007005"/>
    <property type="project" value="UniProtKB"/>
</dbReference>
<dbReference type="GO" id="GO:0098685">
    <property type="term" value="C:Schaffer collateral - CA1 synapse"/>
    <property type="evidence" value="ECO:0000250"/>
    <property type="project" value="UniProtKB"/>
</dbReference>
<dbReference type="GO" id="GO:0005096">
    <property type="term" value="F:GTPase activator activity"/>
    <property type="evidence" value="ECO:0000314"/>
    <property type="project" value="UniProtKB"/>
</dbReference>
<dbReference type="GO" id="GO:0005085">
    <property type="term" value="F:guanyl-nucleotide exchange factor activity"/>
    <property type="evidence" value="ECO:0000314"/>
    <property type="project" value="UniProtKB"/>
</dbReference>
<dbReference type="GO" id="GO:0090630">
    <property type="term" value="P:activation of GTPase activity"/>
    <property type="evidence" value="ECO:0000314"/>
    <property type="project" value="UniProtKB"/>
</dbReference>
<dbReference type="GO" id="GO:0050804">
    <property type="term" value="P:modulation of chemical synaptic transmission"/>
    <property type="evidence" value="ECO:0000250"/>
    <property type="project" value="UniProtKB"/>
</dbReference>
<dbReference type="GO" id="GO:0051056">
    <property type="term" value="P:regulation of small GTPase mediated signal transduction"/>
    <property type="evidence" value="ECO:0000304"/>
    <property type="project" value="Reactome"/>
</dbReference>
<dbReference type="GO" id="GO:0007264">
    <property type="term" value="P:small GTPase-mediated signal transduction"/>
    <property type="evidence" value="ECO:0000304"/>
    <property type="project" value="ProtInc"/>
</dbReference>
<dbReference type="CDD" id="cd08686">
    <property type="entry name" value="C2_ABR"/>
    <property type="match status" value="1"/>
</dbReference>
<dbReference type="CDD" id="cd13366">
    <property type="entry name" value="PH_ABR"/>
    <property type="match status" value="1"/>
</dbReference>
<dbReference type="CDD" id="cd04387">
    <property type="entry name" value="RhoGAP_Bcr"/>
    <property type="match status" value="1"/>
</dbReference>
<dbReference type="CDD" id="cd00160">
    <property type="entry name" value="RhoGEF"/>
    <property type="match status" value="1"/>
</dbReference>
<dbReference type="FunFam" id="2.60.40.150:FF:000057">
    <property type="entry name" value="active breakpoint cluster region-related protein isoform X1"/>
    <property type="match status" value="1"/>
</dbReference>
<dbReference type="FunFam" id="1.20.900.10:FF:000014">
    <property type="entry name" value="active breakpoint cluster region-related protein isoform X2"/>
    <property type="match status" value="1"/>
</dbReference>
<dbReference type="FunFam" id="2.30.29.30:FF:000112">
    <property type="entry name" value="active breakpoint cluster region-related protein isoform X2"/>
    <property type="match status" value="1"/>
</dbReference>
<dbReference type="FunFam" id="1.10.555.10:FF:000004">
    <property type="entry name" value="active breakpoint cluster region-related protein-like"/>
    <property type="match status" value="1"/>
</dbReference>
<dbReference type="Gene3D" id="2.60.40.150">
    <property type="entry name" value="C2 domain"/>
    <property type="match status" value="1"/>
</dbReference>
<dbReference type="Gene3D" id="1.20.900.10">
    <property type="entry name" value="Dbl homology (DH) domain"/>
    <property type="match status" value="1"/>
</dbReference>
<dbReference type="Gene3D" id="2.30.29.30">
    <property type="entry name" value="Pleckstrin-homology domain (PH domain)/Phosphotyrosine-binding domain (PTB)"/>
    <property type="match status" value="1"/>
</dbReference>
<dbReference type="Gene3D" id="1.10.555.10">
    <property type="entry name" value="Rho GTPase activation protein"/>
    <property type="match status" value="1"/>
</dbReference>
<dbReference type="InterPro" id="IPR037769">
    <property type="entry name" value="Abr/Bcr"/>
</dbReference>
<dbReference type="InterPro" id="IPR037865">
    <property type="entry name" value="ABR_PH"/>
</dbReference>
<dbReference type="InterPro" id="IPR000008">
    <property type="entry name" value="C2_dom"/>
</dbReference>
<dbReference type="InterPro" id="IPR035892">
    <property type="entry name" value="C2_domain_sf"/>
</dbReference>
<dbReference type="InterPro" id="IPR035899">
    <property type="entry name" value="DBL_dom_sf"/>
</dbReference>
<dbReference type="InterPro" id="IPR000219">
    <property type="entry name" value="DH_dom"/>
</dbReference>
<dbReference type="InterPro" id="IPR001331">
    <property type="entry name" value="GDS_CDC24_CS"/>
</dbReference>
<dbReference type="InterPro" id="IPR011993">
    <property type="entry name" value="PH-like_dom_sf"/>
</dbReference>
<dbReference type="InterPro" id="IPR001849">
    <property type="entry name" value="PH_domain"/>
</dbReference>
<dbReference type="InterPro" id="IPR008936">
    <property type="entry name" value="Rho_GTPase_activation_prot"/>
</dbReference>
<dbReference type="InterPro" id="IPR000198">
    <property type="entry name" value="RhoGAP_dom"/>
</dbReference>
<dbReference type="PANTHER" id="PTHR23182:SF5">
    <property type="entry name" value="ACTIVE BREAKPOINT CLUSTER REGION-RELATED PROTEIN"/>
    <property type="match status" value="1"/>
</dbReference>
<dbReference type="PANTHER" id="PTHR23182">
    <property type="entry name" value="BREAKPOINT CLUSTER REGION PROTEIN BCR"/>
    <property type="match status" value="1"/>
</dbReference>
<dbReference type="Pfam" id="PF00168">
    <property type="entry name" value="C2"/>
    <property type="match status" value="1"/>
</dbReference>
<dbReference type="Pfam" id="PF19057">
    <property type="entry name" value="PH_19"/>
    <property type="match status" value="1"/>
</dbReference>
<dbReference type="Pfam" id="PF00620">
    <property type="entry name" value="RhoGAP"/>
    <property type="match status" value="1"/>
</dbReference>
<dbReference type="Pfam" id="PF00621">
    <property type="entry name" value="RhoGEF"/>
    <property type="match status" value="1"/>
</dbReference>
<dbReference type="SMART" id="SM00239">
    <property type="entry name" value="C2"/>
    <property type="match status" value="1"/>
</dbReference>
<dbReference type="SMART" id="SM00233">
    <property type="entry name" value="PH"/>
    <property type="match status" value="1"/>
</dbReference>
<dbReference type="SMART" id="SM00324">
    <property type="entry name" value="RhoGAP"/>
    <property type="match status" value="1"/>
</dbReference>
<dbReference type="SMART" id="SM00325">
    <property type="entry name" value="RhoGEF"/>
    <property type="match status" value="1"/>
</dbReference>
<dbReference type="SUPFAM" id="SSF49562">
    <property type="entry name" value="C2 domain (Calcium/lipid-binding domain, CaLB)"/>
    <property type="match status" value="1"/>
</dbReference>
<dbReference type="SUPFAM" id="SSF48065">
    <property type="entry name" value="DBL homology domain (DH-domain)"/>
    <property type="match status" value="1"/>
</dbReference>
<dbReference type="SUPFAM" id="SSF48350">
    <property type="entry name" value="GTPase activation domain, GAP"/>
    <property type="match status" value="1"/>
</dbReference>
<dbReference type="SUPFAM" id="SSF50729">
    <property type="entry name" value="PH domain-like"/>
    <property type="match status" value="1"/>
</dbReference>
<dbReference type="PROSITE" id="PS50004">
    <property type="entry name" value="C2"/>
    <property type="match status" value="1"/>
</dbReference>
<dbReference type="PROSITE" id="PS00741">
    <property type="entry name" value="DH_1"/>
    <property type="match status" value="1"/>
</dbReference>
<dbReference type="PROSITE" id="PS50010">
    <property type="entry name" value="DH_2"/>
    <property type="match status" value="1"/>
</dbReference>
<dbReference type="PROSITE" id="PS50003">
    <property type="entry name" value="PH_DOMAIN"/>
    <property type="match status" value="1"/>
</dbReference>
<dbReference type="PROSITE" id="PS50238">
    <property type="entry name" value="RHOGAP"/>
    <property type="match status" value="1"/>
</dbReference>
<name>ABR_HUMAN</name>
<reference key="1">
    <citation type="journal article" date="1993" name="J. Biol. Chem.">
        <title>The human active breakpoint cluster region-related gene encodes a brain protein with homology to guanine nucleotide exchange proteins and GTPase-activating proteins.</title>
        <authorList>
            <person name="Tan E.-C."/>
            <person name="Leung T."/>
            <person name="Manser E."/>
            <person name="Lim L."/>
        </authorList>
    </citation>
    <scope>NUCLEOTIDE SEQUENCE [MRNA] (ISOFORM LONG)</scope>
    <source>
        <tissue>Hippocampus</tissue>
    </source>
</reference>
<reference key="2">
    <citation type="journal article" date="2004" name="Nat. Genet.">
        <title>Complete sequencing and characterization of 21,243 full-length human cDNAs.</title>
        <authorList>
            <person name="Ota T."/>
            <person name="Suzuki Y."/>
            <person name="Nishikawa T."/>
            <person name="Otsuki T."/>
            <person name="Sugiyama T."/>
            <person name="Irie R."/>
            <person name="Wakamatsu A."/>
            <person name="Hayashi K."/>
            <person name="Sato H."/>
            <person name="Nagai K."/>
            <person name="Kimura K."/>
            <person name="Makita H."/>
            <person name="Sekine M."/>
            <person name="Obayashi M."/>
            <person name="Nishi T."/>
            <person name="Shibahara T."/>
            <person name="Tanaka T."/>
            <person name="Ishii S."/>
            <person name="Yamamoto J."/>
            <person name="Saito K."/>
            <person name="Kawai Y."/>
            <person name="Isono Y."/>
            <person name="Nakamura Y."/>
            <person name="Nagahari K."/>
            <person name="Murakami K."/>
            <person name="Yasuda T."/>
            <person name="Iwayanagi T."/>
            <person name="Wagatsuma M."/>
            <person name="Shiratori A."/>
            <person name="Sudo H."/>
            <person name="Hosoiri T."/>
            <person name="Kaku Y."/>
            <person name="Kodaira H."/>
            <person name="Kondo H."/>
            <person name="Sugawara M."/>
            <person name="Takahashi M."/>
            <person name="Kanda K."/>
            <person name="Yokoi T."/>
            <person name="Furuya T."/>
            <person name="Kikkawa E."/>
            <person name="Omura Y."/>
            <person name="Abe K."/>
            <person name="Kamihara K."/>
            <person name="Katsuta N."/>
            <person name="Sato K."/>
            <person name="Tanikawa M."/>
            <person name="Yamazaki M."/>
            <person name="Ninomiya K."/>
            <person name="Ishibashi T."/>
            <person name="Yamashita H."/>
            <person name="Murakawa K."/>
            <person name="Fujimori K."/>
            <person name="Tanai H."/>
            <person name="Kimata M."/>
            <person name="Watanabe M."/>
            <person name="Hiraoka S."/>
            <person name="Chiba Y."/>
            <person name="Ishida S."/>
            <person name="Ono Y."/>
            <person name="Takiguchi S."/>
            <person name="Watanabe S."/>
            <person name="Yosida M."/>
            <person name="Hotuta T."/>
            <person name="Kusano J."/>
            <person name="Kanehori K."/>
            <person name="Takahashi-Fujii A."/>
            <person name="Hara H."/>
            <person name="Tanase T.-O."/>
            <person name="Nomura Y."/>
            <person name="Togiya S."/>
            <person name="Komai F."/>
            <person name="Hara R."/>
            <person name="Takeuchi K."/>
            <person name="Arita M."/>
            <person name="Imose N."/>
            <person name="Musashino K."/>
            <person name="Yuuki H."/>
            <person name="Oshima A."/>
            <person name="Sasaki N."/>
            <person name="Aotsuka S."/>
            <person name="Yoshikawa Y."/>
            <person name="Matsunawa H."/>
            <person name="Ichihara T."/>
            <person name="Shiohata N."/>
            <person name="Sano S."/>
            <person name="Moriya S."/>
            <person name="Momiyama H."/>
            <person name="Satoh N."/>
            <person name="Takami S."/>
            <person name="Terashima Y."/>
            <person name="Suzuki O."/>
            <person name="Nakagawa S."/>
            <person name="Senoh A."/>
            <person name="Mizoguchi H."/>
            <person name="Goto Y."/>
            <person name="Shimizu F."/>
            <person name="Wakebe H."/>
            <person name="Hishigaki H."/>
            <person name="Watanabe T."/>
            <person name="Sugiyama A."/>
            <person name="Takemoto M."/>
            <person name="Kawakami B."/>
            <person name="Yamazaki M."/>
            <person name="Watanabe K."/>
            <person name="Kumagai A."/>
            <person name="Itakura S."/>
            <person name="Fukuzumi Y."/>
            <person name="Fujimori Y."/>
            <person name="Komiyama M."/>
            <person name="Tashiro H."/>
            <person name="Tanigami A."/>
            <person name="Fujiwara T."/>
            <person name="Ono T."/>
            <person name="Yamada K."/>
            <person name="Fujii Y."/>
            <person name="Ozaki K."/>
            <person name="Hirao M."/>
            <person name="Ohmori Y."/>
            <person name="Kawabata A."/>
            <person name="Hikiji T."/>
            <person name="Kobatake N."/>
            <person name="Inagaki H."/>
            <person name="Ikema Y."/>
            <person name="Okamoto S."/>
            <person name="Okitani R."/>
            <person name="Kawakami T."/>
            <person name="Noguchi S."/>
            <person name="Itoh T."/>
            <person name="Shigeta K."/>
            <person name="Senba T."/>
            <person name="Matsumura K."/>
            <person name="Nakajima Y."/>
            <person name="Mizuno T."/>
            <person name="Morinaga M."/>
            <person name="Sasaki M."/>
            <person name="Togashi T."/>
            <person name="Oyama M."/>
            <person name="Hata H."/>
            <person name="Watanabe M."/>
            <person name="Komatsu T."/>
            <person name="Mizushima-Sugano J."/>
            <person name="Satoh T."/>
            <person name="Shirai Y."/>
            <person name="Takahashi Y."/>
            <person name="Nakagawa K."/>
            <person name="Okumura K."/>
            <person name="Nagase T."/>
            <person name="Nomura N."/>
            <person name="Kikuchi H."/>
            <person name="Masuho Y."/>
            <person name="Yamashita R."/>
            <person name="Nakai K."/>
            <person name="Yada T."/>
            <person name="Nakamura Y."/>
            <person name="Ohara O."/>
            <person name="Isogai T."/>
            <person name="Sugano S."/>
        </authorList>
    </citation>
    <scope>NUCLEOTIDE SEQUENCE [LARGE SCALE MRNA] (ISOFORMS 3 AND 4)</scope>
    <scope>VARIANT ARG-517</scope>
    <source>
        <tissue>Cerebellum</tissue>
        <tissue>Placenta</tissue>
    </source>
</reference>
<reference key="3">
    <citation type="journal article" date="1993" name="J. Biol. Chem.">
        <title>Human ABR encodes a protein with GAPrac activity and homology to the DBL nucleotide exchange factor domain.</title>
        <authorList>
            <person name="Heisterkamp N."/>
            <person name="Kaartinen V."/>
            <person name="van Soest S."/>
            <person name="Bokoch G.M."/>
            <person name="Groffen J."/>
        </authorList>
    </citation>
    <scope>NUCLEOTIDE SEQUENCE [GENOMIC DNA]</scope>
    <scope>ALTERNATIVE SPLICING</scope>
    <source>
        <tissue>Fibroblast</tissue>
    </source>
</reference>
<reference key="4">
    <citation type="journal article" date="2006" name="Nature">
        <title>DNA sequence of human chromosome 17 and analysis of rearrangement in the human lineage.</title>
        <authorList>
            <person name="Zody M.C."/>
            <person name="Garber M."/>
            <person name="Adams D.J."/>
            <person name="Sharpe T."/>
            <person name="Harrow J."/>
            <person name="Lupski J.R."/>
            <person name="Nicholson C."/>
            <person name="Searle S.M."/>
            <person name="Wilming L."/>
            <person name="Young S.K."/>
            <person name="Abouelleil A."/>
            <person name="Allen N.R."/>
            <person name="Bi W."/>
            <person name="Bloom T."/>
            <person name="Borowsky M.L."/>
            <person name="Bugalter B.E."/>
            <person name="Butler J."/>
            <person name="Chang J.L."/>
            <person name="Chen C.-K."/>
            <person name="Cook A."/>
            <person name="Corum B."/>
            <person name="Cuomo C.A."/>
            <person name="de Jong P.J."/>
            <person name="DeCaprio D."/>
            <person name="Dewar K."/>
            <person name="FitzGerald M."/>
            <person name="Gilbert J."/>
            <person name="Gibson R."/>
            <person name="Gnerre S."/>
            <person name="Goldstein S."/>
            <person name="Grafham D.V."/>
            <person name="Grocock R."/>
            <person name="Hafez N."/>
            <person name="Hagopian D.S."/>
            <person name="Hart E."/>
            <person name="Norman C.H."/>
            <person name="Humphray S."/>
            <person name="Jaffe D.B."/>
            <person name="Jones M."/>
            <person name="Kamal M."/>
            <person name="Khodiyar V.K."/>
            <person name="LaButti K."/>
            <person name="Laird G."/>
            <person name="Lehoczky J."/>
            <person name="Liu X."/>
            <person name="Lokyitsang T."/>
            <person name="Loveland J."/>
            <person name="Lui A."/>
            <person name="Macdonald P."/>
            <person name="Major J.E."/>
            <person name="Matthews L."/>
            <person name="Mauceli E."/>
            <person name="McCarroll S.A."/>
            <person name="Mihalev A.H."/>
            <person name="Mudge J."/>
            <person name="Nguyen C."/>
            <person name="Nicol R."/>
            <person name="O'Leary S.B."/>
            <person name="Osoegawa K."/>
            <person name="Schwartz D.C."/>
            <person name="Shaw-Smith C."/>
            <person name="Stankiewicz P."/>
            <person name="Steward C."/>
            <person name="Swarbreck D."/>
            <person name="Venkataraman V."/>
            <person name="Whittaker C.A."/>
            <person name="Yang X."/>
            <person name="Zimmer A.R."/>
            <person name="Bradley A."/>
            <person name="Hubbard T."/>
            <person name="Birren B.W."/>
            <person name="Rogers J."/>
            <person name="Lander E.S."/>
            <person name="Nusbaum C."/>
        </authorList>
    </citation>
    <scope>NUCLEOTIDE SEQUENCE [LARGE SCALE GENOMIC DNA]</scope>
</reference>
<reference key="5">
    <citation type="submission" date="2005-09" db="EMBL/GenBank/DDBJ databases">
        <authorList>
            <person name="Mural R.J."/>
            <person name="Istrail S."/>
            <person name="Sutton G.G."/>
            <person name="Florea L."/>
            <person name="Halpern A.L."/>
            <person name="Mobarry C.M."/>
            <person name="Lippert R."/>
            <person name="Walenz B."/>
            <person name="Shatkay H."/>
            <person name="Dew I."/>
            <person name="Miller J.R."/>
            <person name="Flanigan M.J."/>
            <person name="Edwards N.J."/>
            <person name="Bolanos R."/>
            <person name="Fasulo D."/>
            <person name="Halldorsson B.V."/>
            <person name="Hannenhalli S."/>
            <person name="Turner R."/>
            <person name="Yooseph S."/>
            <person name="Lu F."/>
            <person name="Nusskern D.R."/>
            <person name="Shue B.C."/>
            <person name="Zheng X.H."/>
            <person name="Zhong F."/>
            <person name="Delcher A.L."/>
            <person name="Huson D.H."/>
            <person name="Kravitz S.A."/>
            <person name="Mouchard L."/>
            <person name="Reinert K."/>
            <person name="Remington K.A."/>
            <person name="Clark A.G."/>
            <person name="Waterman M.S."/>
            <person name="Eichler E.E."/>
            <person name="Adams M.D."/>
            <person name="Hunkapiller M.W."/>
            <person name="Myers E.W."/>
            <person name="Venter J.C."/>
        </authorList>
    </citation>
    <scope>NUCLEOTIDE SEQUENCE [LARGE SCALE GENOMIC DNA]</scope>
</reference>
<reference key="6">
    <citation type="journal article" date="1989" name="Nucleic Acids Res.">
        <title>ABR, an active BCR-related gene.</title>
        <authorList>
            <person name="Heisterkamp N."/>
            <person name="Morris C."/>
            <person name="Groffen J."/>
        </authorList>
    </citation>
    <scope>NUCLEOTIDE SEQUENCE [GENOMIC DNA] OF 436-597</scope>
</reference>
<reference key="7">
    <citation type="journal article" date="1995" name="Proc. Natl. Acad. Sci. U.S.A.">
        <title>Abr and Bcr are multifunctional regulators of the Rho GTP-binding protein family.</title>
        <authorList>
            <person name="Chuang T.H."/>
            <person name="Xu X."/>
            <person name="Kaartinen V."/>
            <person name="Heisterkamp N."/>
            <person name="Groffen J."/>
            <person name="Bokoch G.M."/>
        </authorList>
    </citation>
    <scope>FUNCTION</scope>
    <scope>DOMAIN</scope>
</reference>
<reference key="8">
    <citation type="journal article" date="2007" name="Mol. Cell. Biol.">
        <title>Abr and Bcr, two homologous Rac GTPase-activating proteins, control multiple cellular functions of murine macrophages.</title>
        <authorList>
            <person name="Cho Y.J."/>
            <person name="Cunnick J.M."/>
            <person name="Yi S.J."/>
            <person name="Kaartinen V."/>
            <person name="Groffen J."/>
            <person name="Heisterkamp N."/>
        </authorList>
    </citation>
    <scope>FUNCTION</scope>
    <scope>MUTAGENESIS OF ARG-683 AND ASN-795</scope>
</reference>
<reference key="9">
    <citation type="journal article" date="2010" name="J. Neurosci.">
        <title>Regulation of synaptic Rac1 activity, long-term potentiation maintenance, and learning and memory by BCR and ABR Rac GTPase-activating proteins.</title>
        <authorList>
            <person name="Oh D."/>
            <person name="Han S."/>
            <person name="Seo J."/>
            <person name="Lee J.R."/>
            <person name="Choi J."/>
            <person name="Groffen J."/>
            <person name="Kim K."/>
            <person name="Cho Y.S."/>
            <person name="Choi H.S."/>
            <person name="Shin H."/>
            <person name="Woo J."/>
            <person name="Won H."/>
            <person name="Park S.K."/>
            <person name="Kim S.Y."/>
            <person name="Jo J."/>
            <person name="Whitcomb D.J."/>
            <person name="Cho K."/>
            <person name="Kim H."/>
            <person name="Bae Y.C."/>
            <person name="Heisterkamp N."/>
            <person name="Choi S.Y."/>
            <person name="Kim E."/>
        </authorList>
    </citation>
    <scope>FUNCTION</scope>
    <scope>INTERACTION WITH DLG4</scope>
    <scope>MUTAGENESIS OF VAL-859</scope>
</reference>
<evidence type="ECO:0000250" key="1">
    <source>
        <dbReference type="UniProtKB" id="A0A0G2JTR4"/>
    </source>
</evidence>
<evidence type="ECO:0000250" key="2">
    <source>
        <dbReference type="UniProtKB" id="Q5SSL4"/>
    </source>
</evidence>
<evidence type="ECO:0000255" key="3">
    <source>
        <dbReference type="PROSITE-ProRule" id="PRU00041"/>
    </source>
</evidence>
<evidence type="ECO:0000255" key="4">
    <source>
        <dbReference type="PROSITE-ProRule" id="PRU00062"/>
    </source>
</evidence>
<evidence type="ECO:0000255" key="5">
    <source>
        <dbReference type="PROSITE-ProRule" id="PRU00145"/>
    </source>
</evidence>
<evidence type="ECO:0000255" key="6">
    <source>
        <dbReference type="PROSITE-ProRule" id="PRU00172"/>
    </source>
</evidence>
<evidence type="ECO:0000256" key="7">
    <source>
        <dbReference type="SAM" id="MobiDB-lite"/>
    </source>
</evidence>
<evidence type="ECO:0000269" key="8">
    <source>
    </source>
</evidence>
<evidence type="ECO:0000269" key="9">
    <source>
    </source>
</evidence>
<evidence type="ECO:0000269" key="10">
    <source>
    </source>
</evidence>
<evidence type="ECO:0000269" key="11">
    <source>
    </source>
</evidence>
<evidence type="ECO:0000303" key="12">
    <source>
    </source>
</evidence>
<evidence type="ECO:0000305" key="13"/>
<evidence type="ECO:0000305" key="14">
    <source>
    </source>
</evidence>
<evidence type="ECO:0000312" key="15">
    <source>
        <dbReference type="HGNC" id="HGNC:81"/>
    </source>
</evidence>
<feature type="chain" id="PRO_0000080902" description="Active breakpoint cluster region-related protein">
    <location>
        <begin position="1"/>
        <end position="859"/>
    </location>
</feature>
<feature type="domain" description="DH" evidence="4">
    <location>
        <begin position="91"/>
        <end position="284"/>
    </location>
</feature>
<feature type="domain" description="PH" evidence="5">
    <location>
        <begin position="301"/>
        <end position="459"/>
    </location>
</feature>
<feature type="domain" description="C2" evidence="3">
    <location>
        <begin position="484"/>
        <end position="613"/>
    </location>
</feature>
<feature type="domain" description="Rho-GAP" evidence="6">
    <location>
        <begin position="647"/>
        <end position="845"/>
    </location>
</feature>
<feature type="region of interest" description="Disordered" evidence="7">
    <location>
        <begin position="26"/>
        <end position="84"/>
    </location>
</feature>
<feature type="compositionally biased region" description="Polar residues" evidence="7">
    <location>
        <begin position="54"/>
        <end position="64"/>
    </location>
</feature>
<feature type="site" description="Arginine finger; crucial for GTP hydrolysis by stabilizing the transition state" evidence="6">
    <location>
        <position position="683"/>
    </location>
</feature>
<feature type="modified residue" description="Phosphoserine" evidence="2">
    <location>
        <position position="57"/>
    </location>
</feature>
<feature type="splice variant" id="VSP_001815" description="In isoform Short." evidence="13">
    <original>MEPLSHRGLPRLSWIDTLYSNFSYGTDEYDGEGNEEQKGPPEGSETMPYIDESPTMSPQLSARSQGGGDGVSPTPPEGLAPG</original>
    <variation>MEEEEEAIGLLDKVLEDEDVFLLEECELGTPTSPGSGSPFLVAVK</variation>
    <location>
        <begin position="1"/>
        <end position="82"/>
    </location>
</feature>
<feature type="splice variant" id="VSP_046029" description="In isoform 3." evidence="12">
    <original>MEPLSHRGLPRLSWIDTLYSNFSYGTDEYDGEGNEEQKGPPEGSETMP</original>
    <variation>MTDVLPQPDCSPKAGREPLALEESGSKRPPNTGARLWGRVRNKLLRNK</variation>
    <location>
        <begin position="1"/>
        <end position="48"/>
    </location>
</feature>
<feature type="splice variant" id="VSP_046148" description="In isoform 4." evidence="12">
    <location>
        <begin position="1"/>
        <end position="46"/>
    </location>
</feature>
<feature type="splice variant" id="VSP_046030" description="In isoform 3." evidence="12">
    <location>
        <begin position="49"/>
        <end position="597"/>
    </location>
</feature>
<feature type="sequence variant" id="VAR_057186" description="In dbSNP:rs34169260." evidence="8">
    <original>K</original>
    <variation>R</variation>
    <location>
        <position position="517"/>
    </location>
</feature>
<feature type="mutagenesis site" description="Reduces GAP activity. Loss of GAP activity; when associated with A-795." evidence="9">
    <original>R</original>
    <variation>A</variation>
    <location>
        <position position="683"/>
    </location>
</feature>
<feature type="mutagenesis site" description="Loss of GAP activity; when associated with A-683." evidence="9">
    <original>N</original>
    <variation>A</variation>
    <location>
        <position position="795"/>
    </location>
</feature>
<feature type="mutagenesis site" description="Abolishes interaction with DLG4. No effect on synaptic localization." evidence="10">
    <original>V</original>
    <variation>A</variation>
    <location>
        <position position="859"/>
    </location>
</feature>
<feature type="sequence conflict" description="In Ref. 1; AAC50063." evidence="13" ref="1">
    <original>G</original>
    <variation>R</variation>
    <location>
        <position position="67"/>
    </location>
</feature>
<feature type="sequence conflict" description="In Ref. 2; BAG54051." evidence="13" ref="2">
    <original>R</original>
    <variation>K</variation>
    <location>
        <position position="483"/>
    </location>
</feature>
<feature type="sequence conflict" description="In Ref. 2; BAH13263." evidence="13" ref="2">
    <original>K</original>
    <variation>R</variation>
    <location>
        <position position="625"/>
    </location>
</feature>
<feature type="sequence conflict" description="In Ref. 3; AAC37519." evidence="13" ref="3">
    <original>RSKV</original>
    <variation>VQGA</variation>
    <location>
        <begin position="657"/>
        <end position="660"/>
    </location>
</feature>
<feature type="sequence conflict" description="In Ref. 3; AAC37519." evidence="13" ref="3">
    <original>L</original>
    <variation>V</variation>
    <location>
        <position position="761"/>
    </location>
</feature>
<accession>Q12979</accession>
<accession>B3KW89</accession>
<accession>B7Z6H7</accession>
<accession>D3DTH3</accession>
<accession>D3DTH4</accession>
<accession>F5H3S2</accession>
<accession>F5H8B3</accession>
<accession>Q13693</accession>
<accession>Q13694</accession>
<keyword id="KW-0025">Alternative splicing</keyword>
<keyword id="KW-0966">Cell projection</keyword>
<keyword id="KW-0343">GTPase activation</keyword>
<keyword id="KW-0344">Guanine-nucleotide releasing factor</keyword>
<keyword id="KW-0597">Phosphoprotein</keyword>
<keyword id="KW-1267">Proteomics identification</keyword>
<keyword id="KW-1185">Reference proteome</keyword>
<keyword id="KW-0770">Synapse</keyword>
<comment type="function">
    <text evidence="2 9 11">Protein with a unique structure having two opposing regulatory activities toward small GTP-binding proteins. The C-terminus is a GTPase-activating protein domain which stimulates GTP hydrolysis by RAC1, RAC2 and CDC42. Accelerates the intrinsic rate of GTP hydrolysis of RAC1 or CDC42, leading to down-regulation of the active GTP-bound form (PubMed:17116687, PubMed:7479768). The central Dbl homology (DH) domain functions as a guanine nucleotide exchange factor (GEF) that modulates the GTPases CDC42, RHOA and RAC1. Promotes the conversion of CDC42, RHOA and RAC1 from the GDP-bound to the GTP-bound form (PubMed:7479768). Functions as an important negative regulator of neuronal RAC1 activity (By similarity). Regulates macrophage functions such as CSF-1 directed motility and phagocytosis through the modulation of RAC1 activity (By similarity).</text>
</comment>
<comment type="subunit">
    <text evidence="10">Interacts with DLG4.</text>
</comment>
<comment type="subcellular location">
    <subcellularLocation>
        <location evidence="2">Cell projection</location>
        <location evidence="2">Dendritic spine</location>
    </subcellularLocation>
    <subcellularLocation>
        <location evidence="2">Cell projection</location>
        <location evidence="2">Axon</location>
    </subcellularLocation>
    <subcellularLocation>
        <location evidence="1">Synapse</location>
    </subcellularLocation>
</comment>
<comment type="alternative products">
    <event type="alternative splicing"/>
    <isoform>
        <id>Q12979-1</id>
        <name>Long</name>
        <sequence type="displayed"/>
    </isoform>
    <isoform>
        <id>Q12979-2</id>
        <name>Short</name>
        <sequence type="described" ref="VSP_001815"/>
    </isoform>
    <isoform>
        <id>Q12979-3</id>
        <name>3</name>
        <sequence type="described" ref="VSP_046029 VSP_046030"/>
    </isoform>
    <isoform>
        <id>Q12979-4</id>
        <name>4</name>
        <sequence type="described" ref="VSP_046148"/>
    </isoform>
</comment>
<comment type="tissue specificity">
    <text>Highly enriched in the brain. Much weaker expression in heart, lung and muscle.</text>
</comment>
<comment type="domain">
    <text evidence="14">The central Dbl homology (DH) domain functions as a guanine nucleotide exchange factor (GEF) that modulates the GTPases CDC42, RHOA and RAC1. Promotes the conversion of CDC42, RHOA and RAC1 from the GDP-bound to the GTP-bound form. The C-terminus is a Rho-GAP domain which stimulates GTP hydrolysis by RAC1, RAC2 and CDC42. The protein has a unique structure having two opposing regulatory activities toward small GTP-binding proteins.</text>
</comment>
<gene>
    <name evidence="15" type="primary">ABR</name>
</gene>
<proteinExistence type="evidence at protein level"/>